<protein>
    <recommendedName>
        <fullName evidence="1">ATP-dependent Clp protease proteolytic subunit</fullName>
        <ecNumber evidence="1">3.4.21.92</ecNumber>
    </recommendedName>
    <alternativeName>
        <fullName evidence="1">Endopeptidase Clp</fullName>
    </alternativeName>
</protein>
<keyword id="KW-0963">Cytoplasm</keyword>
<keyword id="KW-0378">Hydrolase</keyword>
<keyword id="KW-0645">Protease</keyword>
<keyword id="KW-0720">Serine protease</keyword>
<organism>
    <name type="scientific">Neisseria meningitidis serogroup C (strain 053442)</name>
    <dbReference type="NCBI Taxonomy" id="374833"/>
    <lineage>
        <taxon>Bacteria</taxon>
        <taxon>Pseudomonadati</taxon>
        <taxon>Pseudomonadota</taxon>
        <taxon>Betaproteobacteria</taxon>
        <taxon>Neisseriales</taxon>
        <taxon>Neisseriaceae</taxon>
        <taxon>Neisseria</taxon>
    </lineage>
</organism>
<evidence type="ECO:0000255" key="1">
    <source>
        <dbReference type="HAMAP-Rule" id="MF_00444"/>
    </source>
</evidence>
<proteinExistence type="inferred from homology"/>
<gene>
    <name evidence="1" type="primary">clpP</name>
    <name type="ordered locus">NMCC_1224</name>
</gene>
<name>CLPP_NEIM0</name>
<reference key="1">
    <citation type="journal article" date="2008" name="Genomics">
        <title>Characterization of ST-4821 complex, a unique Neisseria meningitidis clone.</title>
        <authorList>
            <person name="Peng J."/>
            <person name="Yang L."/>
            <person name="Yang F."/>
            <person name="Yang J."/>
            <person name="Yan Y."/>
            <person name="Nie H."/>
            <person name="Zhang X."/>
            <person name="Xiong Z."/>
            <person name="Jiang Y."/>
            <person name="Cheng F."/>
            <person name="Xu X."/>
            <person name="Chen S."/>
            <person name="Sun L."/>
            <person name="Li W."/>
            <person name="Shen Y."/>
            <person name="Shao Z."/>
            <person name="Liang X."/>
            <person name="Xu J."/>
            <person name="Jin Q."/>
        </authorList>
    </citation>
    <scope>NUCLEOTIDE SEQUENCE [LARGE SCALE GENOMIC DNA]</scope>
    <source>
        <strain>053442</strain>
    </source>
</reference>
<accession>A9LZN9</accession>
<comment type="function">
    <text evidence="1">Cleaves peptides in various proteins in a process that requires ATP hydrolysis. Has a chymotrypsin-like activity. Plays a major role in the degradation of misfolded proteins.</text>
</comment>
<comment type="catalytic activity">
    <reaction evidence="1">
        <text>Hydrolysis of proteins to small peptides in the presence of ATP and magnesium. alpha-casein is the usual test substrate. In the absence of ATP, only oligopeptides shorter than five residues are hydrolyzed (such as succinyl-Leu-Tyr-|-NHMec, and Leu-Tyr-Leu-|-Tyr-Trp, in which cleavage of the -Tyr-|-Leu- and -Tyr-|-Trp bonds also occurs).</text>
        <dbReference type="EC" id="3.4.21.92"/>
    </reaction>
</comment>
<comment type="subunit">
    <text evidence="1">Fourteen ClpP subunits assemble into 2 heptameric rings which stack back to back to give a disk-like structure with a central cavity, resembling the structure of eukaryotic proteasomes.</text>
</comment>
<comment type="subcellular location">
    <subcellularLocation>
        <location evidence="1">Cytoplasm</location>
    </subcellularLocation>
</comment>
<comment type="similarity">
    <text evidence="1">Belongs to the peptidase S14 family.</text>
</comment>
<feature type="chain" id="PRO_1000080895" description="ATP-dependent Clp protease proteolytic subunit">
    <location>
        <begin position="1"/>
        <end position="204"/>
    </location>
</feature>
<feature type="active site" description="Nucleophile" evidence="1">
    <location>
        <position position="102"/>
    </location>
</feature>
<feature type="active site" evidence="1">
    <location>
        <position position="127"/>
    </location>
</feature>
<sequence length="204" mass="22652">MSFDNYLVPTVIEQSGRGERAFDIYSRLLKERIVFLVGPVTDESANLVVAQLLFLESENPDKDIFFYINSPGGSVTAGMSIYDTMNFIKPDVSTLCLGQAASMGAFLLSAGEKGKRFALPNSRIMIHQPLISGGLGGQASDIEIHARELLKIKEKLNRLMAKHCGRDLADLERDTDRDNFMSAEEAKEYGLIDQILENRASLQF</sequence>
<dbReference type="EC" id="3.4.21.92" evidence="1"/>
<dbReference type="EMBL" id="CP000381">
    <property type="protein sequence ID" value="ABX73397.1"/>
    <property type="molecule type" value="Genomic_DNA"/>
</dbReference>
<dbReference type="RefSeq" id="WP_002217054.1">
    <property type="nucleotide sequence ID" value="NC_010120.1"/>
</dbReference>
<dbReference type="SMR" id="A9LZN9"/>
<dbReference type="MEROPS" id="S14.001"/>
<dbReference type="KEGG" id="nmn:NMCC_1224"/>
<dbReference type="HOGENOM" id="CLU_058707_3_2_4"/>
<dbReference type="Proteomes" id="UP000001177">
    <property type="component" value="Chromosome"/>
</dbReference>
<dbReference type="GO" id="GO:0005737">
    <property type="term" value="C:cytoplasm"/>
    <property type="evidence" value="ECO:0007669"/>
    <property type="project" value="UniProtKB-SubCell"/>
</dbReference>
<dbReference type="GO" id="GO:0009368">
    <property type="term" value="C:endopeptidase Clp complex"/>
    <property type="evidence" value="ECO:0007669"/>
    <property type="project" value="TreeGrafter"/>
</dbReference>
<dbReference type="GO" id="GO:0004176">
    <property type="term" value="F:ATP-dependent peptidase activity"/>
    <property type="evidence" value="ECO:0007669"/>
    <property type="project" value="InterPro"/>
</dbReference>
<dbReference type="GO" id="GO:0051117">
    <property type="term" value="F:ATPase binding"/>
    <property type="evidence" value="ECO:0007669"/>
    <property type="project" value="TreeGrafter"/>
</dbReference>
<dbReference type="GO" id="GO:0004252">
    <property type="term" value="F:serine-type endopeptidase activity"/>
    <property type="evidence" value="ECO:0007669"/>
    <property type="project" value="UniProtKB-UniRule"/>
</dbReference>
<dbReference type="GO" id="GO:0006515">
    <property type="term" value="P:protein quality control for misfolded or incompletely synthesized proteins"/>
    <property type="evidence" value="ECO:0007669"/>
    <property type="project" value="TreeGrafter"/>
</dbReference>
<dbReference type="CDD" id="cd07017">
    <property type="entry name" value="S14_ClpP_2"/>
    <property type="match status" value="1"/>
</dbReference>
<dbReference type="FunFam" id="3.90.226.10:FF:000001">
    <property type="entry name" value="ATP-dependent Clp protease proteolytic subunit"/>
    <property type="match status" value="1"/>
</dbReference>
<dbReference type="Gene3D" id="3.90.226.10">
    <property type="entry name" value="2-enoyl-CoA Hydratase, Chain A, domain 1"/>
    <property type="match status" value="1"/>
</dbReference>
<dbReference type="HAMAP" id="MF_00444">
    <property type="entry name" value="ClpP"/>
    <property type="match status" value="1"/>
</dbReference>
<dbReference type="InterPro" id="IPR001907">
    <property type="entry name" value="ClpP"/>
</dbReference>
<dbReference type="InterPro" id="IPR029045">
    <property type="entry name" value="ClpP/crotonase-like_dom_sf"/>
</dbReference>
<dbReference type="InterPro" id="IPR023562">
    <property type="entry name" value="ClpP/TepA"/>
</dbReference>
<dbReference type="InterPro" id="IPR033135">
    <property type="entry name" value="ClpP_His_AS"/>
</dbReference>
<dbReference type="InterPro" id="IPR018215">
    <property type="entry name" value="ClpP_Ser_AS"/>
</dbReference>
<dbReference type="NCBIfam" id="TIGR00493">
    <property type="entry name" value="clpP"/>
    <property type="match status" value="1"/>
</dbReference>
<dbReference type="NCBIfam" id="NF001368">
    <property type="entry name" value="PRK00277.1"/>
    <property type="match status" value="1"/>
</dbReference>
<dbReference type="NCBIfam" id="NF009205">
    <property type="entry name" value="PRK12553.1"/>
    <property type="match status" value="1"/>
</dbReference>
<dbReference type="PANTHER" id="PTHR10381">
    <property type="entry name" value="ATP-DEPENDENT CLP PROTEASE PROTEOLYTIC SUBUNIT"/>
    <property type="match status" value="1"/>
</dbReference>
<dbReference type="PANTHER" id="PTHR10381:SF70">
    <property type="entry name" value="ATP-DEPENDENT CLP PROTEASE PROTEOLYTIC SUBUNIT"/>
    <property type="match status" value="1"/>
</dbReference>
<dbReference type="Pfam" id="PF00574">
    <property type="entry name" value="CLP_protease"/>
    <property type="match status" value="1"/>
</dbReference>
<dbReference type="PRINTS" id="PR00127">
    <property type="entry name" value="CLPPROTEASEP"/>
</dbReference>
<dbReference type="SUPFAM" id="SSF52096">
    <property type="entry name" value="ClpP/crotonase"/>
    <property type="match status" value="1"/>
</dbReference>
<dbReference type="PROSITE" id="PS00382">
    <property type="entry name" value="CLP_PROTEASE_HIS"/>
    <property type="match status" value="1"/>
</dbReference>
<dbReference type="PROSITE" id="PS00381">
    <property type="entry name" value="CLP_PROTEASE_SER"/>
    <property type="match status" value="1"/>
</dbReference>